<accession>Q056X6</accession>
<gene>
    <name evidence="1" type="primary">pgi</name>
    <name type="ordered locus">BCc_372</name>
</gene>
<protein>
    <recommendedName>
        <fullName evidence="1">Glucose-6-phosphate isomerase</fullName>
        <shortName evidence="1">GPI</shortName>
        <ecNumber evidence="1">5.3.1.9</ecNumber>
    </recommendedName>
    <alternativeName>
        <fullName evidence="1">Phosphoglucose isomerase</fullName>
        <shortName evidence="1">PGI</shortName>
    </alternativeName>
    <alternativeName>
        <fullName evidence="1">Phosphohexose isomerase</fullName>
        <shortName evidence="1">PHI</shortName>
    </alternativeName>
</protein>
<evidence type="ECO:0000255" key="1">
    <source>
        <dbReference type="HAMAP-Rule" id="MF_00473"/>
    </source>
</evidence>
<comment type="function">
    <text evidence="1">Catalyzes the reversible isomerization of glucose-6-phosphate to fructose-6-phosphate.</text>
</comment>
<comment type="catalytic activity">
    <reaction evidence="1">
        <text>alpha-D-glucose 6-phosphate = beta-D-fructose 6-phosphate</text>
        <dbReference type="Rhea" id="RHEA:11816"/>
        <dbReference type="ChEBI" id="CHEBI:57634"/>
        <dbReference type="ChEBI" id="CHEBI:58225"/>
        <dbReference type="EC" id="5.3.1.9"/>
    </reaction>
</comment>
<comment type="pathway">
    <text evidence="1">Carbohydrate biosynthesis; gluconeogenesis.</text>
</comment>
<comment type="pathway">
    <text evidence="1">Carbohydrate degradation; glycolysis; D-glyceraldehyde 3-phosphate and glycerone phosphate from D-glucose: step 2/4.</text>
</comment>
<comment type="subcellular location">
    <subcellularLocation>
        <location evidence="1">Cytoplasm</location>
    </subcellularLocation>
</comment>
<comment type="similarity">
    <text evidence="1">Belongs to the GPI family.</text>
</comment>
<organism>
    <name type="scientific">Buchnera aphidicola subsp. Cinara cedri (strain Cc)</name>
    <dbReference type="NCBI Taxonomy" id="372461"/>
    <lineage>
        <taxon>Bacteria</taxon>
        <taxon>Pseudomonadati</taxon>
        <taxon>Pseudomonadota</taxon>
        <taxon>Gammaproteobacteria</taxon>
        <taxon>Enterobacterales</taxon>
        <taxon>Erwiniaceae</taxon>
        <taxon>Buchnera</taxon>
    </lineage>
</organism>
<sequence length="546" mass="63296">MKNINPMKTHAWKKLQNHFFDVKNIYIKDFFCLDKNRFANFSVFFKDFMLIDFSKNRISSQTLKLLFQLAQECYLDDAIKNMFLGKIINKTENRPVLHVALRNRLNNKIILNNIDIMNEIQIELKKIKCFSESIIDGSWKGFTGKSISDVVNIGIGGSYLGPYMITEALKIYKNHLNIHYISNIDGTEISEVLKKINLETTIFLIASKSFSTDETISNANYLKKWCILKTNYKKYFSKHFFALCENIKTAINFGIKYENIFKFWDWVGGRYSLWSSSGLSIVLSIGFKNFESLLYGAYLMDQHFLHTKISKNIPIILALISIWYTNFFNTETEAIFPYDKYLHVLPEYLQQSYMESNGKSIDRNGKLVTWNTCPIIWGSTGTNGQHSFFQLLHQGTTMVPCDFIIPAISHNLINDHHKKLLSNFLAQTASLAFGNINKDIMNMNLKYSSENFIFSHKTYFGNKPSNSIFLKKITPISLGSLIALYEHKIFVQGVILNIFSFDQWGVELGKTVANNIYNNLFKKKKINVYDCSTIGLINLYKYWNRI</sequence>
<reference key="1">
    <citation type="journal article" date="2006" name="Science">
        <title>A small microbial genome: the end of a long symbiotic relationship?</title>
        <authorList>
            <person name="Perez-Brocal V."/>
            <person name="Gil R."/>
            <person name="Ramos S."/>
            <person name="Lamelas A."/>
            <person name="Postigo M."/>
            <person name="Michelena J.M."/>
            <person name="Silva F.J."/>
            <person name="Moya A."/>
            <person name="Latorre A."/>
        </authorList>
    </citation>
    <scope>NUCLEOTIDE SEQUENCE [LARGE SCALE GENOMIC DNA]</scope>
    <source>
        <strain>Cc</strain>
    </source>
</reference>
<keyword id="KW-0963">Cytoplasm</keyword>
<keyword id="KW-0312">Gluconeogenesis</keyword>
<keyword id="KW-0324">Glycolysis</keyword>
<keyword id="KW-0413">Isomerase</keyword>
<keyword id="KW-1185">Reference proteome</keyword>
<feature type="chain" id="PRO_1000013945" description="Glucose-6-phosphate isomerase">
    <location>
        <begin position="1"/>
        <end position="546"/>
    </location>
</feature>
<feature type="active site" description="Proton donor" evidence="1">
    <location>
        <position position="355"/>
    </location>
</feature>
<feature type="active site" evidence="1">
    <location>
        <position position="386"/>
    </location>
</feature>
<feature type="active site" evidence="1">
    <location>
        <position position="510"/>
    </location>
</feature>
<dbReference type="EC" id="5.3.1.9" evidence="1"/>
<dbReference type="EMBL" id="CP000263">
    <property type="protein sequence ID" value="ABJ90823.1"/>
    <property type="molecule type" value="Genomic_DNA"/>
</dbReference>
<dbReference type="RefSeq" id="WP_011672742.1">
    <property type="nucleotide sequence ID" value="NC_008513.1"/>
</dbReference>
<dbReference type="SMR" id="Q056X6"/>
<dbReference type="STRING" id="372461.BCc_372"/>
<dbReference type="KEGG" id="bcc:BCc_372"/>
<dbReference type="eggNOG" id="COG0166">
    <property type="taxonomic scope" value="Bacteria"/>
</dbReference>
<dbReference type="HOGENOM" id="CLU_017947_3_1_6"/>
<dbReference type="OrthoDB" id="140919at2"/>
<dbReference type="UniPathway" id="UPA00109">
    <property type="reaction ID" value="UER00181"/>
</dbReference>
<dbReference type="UniPathway" id="UPA00138"/>
<dbReference type="Proteomes" id="UP000000669">
    <property type="component" value="Chromosome"/>
</dbReference>
<dbReference type="GO" id="GO:0005829">
    <property type="term" value="C:cytosol"/>
    <property type="evidence" value="ECO:0007669"/>
    <property type="project" value="TreeGrafter"/>
</dbReference>
<dbReference type="GO" id="GO:0097367">
    <property type="term" value="F:carbohydrate derivative binding"/>
    <property type="evidence" value="ECO:0007669"/>
    <property type="project" value="InterPro"/>
</dbReference>
<dbReference type="GO" id="GO:0004347">
    <property type="term" value="F:glucose-6-phosphate isomerase activity"/>
    <property type="evidence" value="ECO:0007669"/>
    <property type="project" value="UniProtKB-UniRule"/>
</dbReference>
<dbReference type="GO" id="GO:0048029">
    <property type="term" value="F:monosaccharide binding"/>
    <property type="evidence" value="ECO:0007669"/>
    <property type="project" value="TreeGrafter"/>
</dbReference>
<dbReference type="GO" id="GO:0006094">
    <property type="term" value="P:gluconeogenesis"/>
    <property type="evidence" value="ECO:0007669"/>
    <property type="project" value="UniProtKB-UniRule"/>
</dbReference>
<dbReference type="GO" id="GO:0051156">
    <property type="term" value="P:glucose 6-phosphate metabolic process"/>
    <property type="evidence" value="ECO:0007669"/>
    <property type="project" value="TreeGrafter"/>
</dbReference>
<dbReference type="GO" id="GO:0006096">
    <property type="term" value="P:glycolytic process"/>
    <property type="evidence" value="ECO:0007669"/>
    <property type="project" value="UniProtKB-UniRule"/>
</dbReference>
<dbReference type="CDD" id="cd05015">
    <property type="entry name" value="SIS_PGI_1"/>
    <property type="match status" value="1"/>
</dbReference>
<dbReference type="CDD" id="cd05016">
    <property type="entry name" value="SIS_PGI_2"/>
    <property type="match status" value="1"/>
</dbReference>
<dbReference type="Gene3D" id="1.10.1390.10">
    <property type="match status" value="1"/>
</dbReference>
<dbReference type="Gene3D" id="3.40.50.10490">
    <property type="entry name" value="Glucose-6-phosphate isomerase like protein, domain 1"/>
    <property type="match status" value="2"/>
</dbReference>
<dbReference type="HAMAP" id="MF_00473">
    <property type="entry name" value="G6P_isomerase"/>
    <property type="match status" value="1"/>
</dbReference>
<dbReference type="InterPro" id="IPR001672">
    <property type="entry name" value="G6P_Isomerase"/>
</dbReference>
<dbReference type="InterPro" id="IPR023096">
    <property type="entry name" value="G6P_Isomerase_C"/>
</dbReference>
<dbReference type="InterPro" id="IPR018189">
    <property type="entry name" value="Phosphoglucose_isomerase_CS"/>
</dbReference>
<dbReference type="InterPro" id="IPR046348">
    <property type="entry name" value="SIS_dom_sf"/>
</dbReference>
<dbReference type="InterPro" id="IPR035476">
    <property type="entry name" value="SIS_PGI_1"/>
</dbReference>
<dbReference type="InterPro" id="IPR035482">
    <property type="entry name" value="SIS_PGI_2"/>
</dbReference>
<dbReference type="NCBIfam" id="NF001211">
    <property type="entry name" value="PRK00179.1"/>
    <property type="match status" value="1"/>
</dbReference>
<dbReference type="PANTHER" id="PTHR11469">
    <property type="entry name" value="GLUCOSE-6-PHOSPHATE ISOMERASE"/>
    <property type="match status" value="1"/>
</dbReference>
<dbReference type="PANTHER" id="PTHR11469:SF1">
    <property type="entry name" value="GLUCOSE-6-PHOSPHATE ISOMERASE"/>
    <property type="match status" value="1"/>
</dbReference>
<dbReference type="Pfam" id="PF00342">
    <property type="entry name" value="PGI"/>
    <property type="match status" value="1"/>
</dbReference>
<dbReference type="PRINTS" id="PR00662">
    <property type="entry name" value="G6PISOMERASE"/>
</dbReference>
<dbReference type="SUPFAM" id="SSF53697">
    <property type="entry name" value="SIS domain"/>
    <property type="match status" value="1"/>
</dbReference>
<dbReference type="PROSITE" id="PS00765">
    <property type="entry name" value="P_GLUCOSE_ISOMERASE_1"/>
    <property type="match status" value="1"/>
</dbReference>
<dbReference type="PROSITE" id="PS00174">
    <property type="entry name" value="P_GLUCOSE_ISOMERASE_2"/>
    <property type="match status" value="1"/>
</dbReference>
<dbReference type="PROSITE" id="PS51463">
    <property type="entry name" value="P_GLUCOSE_ISOMERASE_3"/>
    <property type="match status" value="1"/>
</dbReference>
<proteinExistence type="inferred from homology"/>
<name>G6PI_BUCCC</name>